<accession>Q8A7S9</accession>
<proteinExistence type="inferred from homology"/>
<reference key="1">
    <citation type="journal article" date="2003" name="Science">
        <title>A genomic view of the human-Bacteroides thetaiotaomicron symbiosis.</title>
        <authorList>
            <person name="Xu J."/>
            <person name="Bjursell M.K."/>
            <person name="Himrod J."/>
            <person name="Deng S."/>
            <person name="Carmichael L.K."/>
            <person name="Chiang H.C."/>
            <person name="Hooper L.V."/>
            <person name="Gordon J.I."/>
        </authorList>
    </citation>
    <scope>NUCLEOTIDE SEQUENCE [LARGE SCALE GENOMIC DNA]</scope>
    <source>
        <strain>ATCC 29148 / DSM 2079 / JCM 5827 / CCUG 10774 / NCTC 10582 / VPI-5482 / E50</strain>
    </source>
</reference>
<feature type="chain" id="PRO_0000412485" description="Malonyl-[acyl-carrier protein] O-methyltransferase">
    <location>
        <begin position="1"/>
        <end position="261"/>
    </location>
</feature>
<dbReference type="EC" id="2.1.1.197" evidence="1"/>
<dbReference type="EMBL" id="AE015928">
    <property type="protein sequence ID" value="AAO76552.1"/>
    <property type="molecule type" value="Genomic_DNA"/>
</dbReference>
<dbReference type="RefSeq" id="NP_810358.1">
    <property type="nucleotide sequence ID" value="NC_004663.1"/>
</dbReference>
<dbReference type="RefSeq" id="WP_011107785.1">
    <property type="nucleotide sequence ID" value="NC_004663.1"/>
</dbReference>
<dbReference type="SMR" id="Q8A7S9"/>
<dbReference type="FunCoup" id="Q8A7S9">
    <property type="interactions" value="222"/>
</dbReference>
<dbReference type="STRING" id="226186.BT_1445"/>
<dbReference type="PaxDb" id="226186-BT_1445"/>
<dbReference type="EnsemblBacteria" id="AAO76552">
    <property type="protein sequence ID" value="AAO76552"/>
    <property type="gene ID" value="BT_1445"/>
</dbReference>
<dbReference type="GeneID" id="60927428"/>
<dbReference type="KEGG" id="bth:BT_1445"/>
<dbReference type="PATRIC" id="fig|226186.12.peg.1477"/>
<dbReference type="eggNOG" id="COG2226">
    <property type="taxonomic scope" value="Bacteria"/>
</dbReference>
<dbReference type="HOGENOM" id="CLU_046586_1_0_10"/>
<dbReference type="InParanoid" id="Q8A7S9"/>
<dbReference type="OrthoDB" id="9760689at2"/>
<dbReference type="UniPathway" id="UPA00078"/>
<dbReference type="Proteomes" id="UP000001414">
    <property type="component" value="Chromosome"/>
</dbReference>
<dbReference type="GO" id="GO:0010340">
    <property type="term" value="F:carboxyl-O-methyltransferase activity"/>
    <property type="evidence" value="ECO:0007669"/>
    <property type="project" value="UniProtKB-UniRule"/>
</dbReference>
<dbReference type="GO" id="GO:0102130">
    <property type="term" value="F:malonyl-CoA methyltransferase activity"/>
    <property type="evidence" value="ECO:0007669"/>
    <property type="project" value="UniProtKB-EC"/>
</dbReference>
<dbReference type="GO" id="GO:0008168">
    <property type="term" value="F:methyltransferase activity"/>
    <property type="evidence" value="ECO:0000318"/>
    <property type="project" value="GO_Central"/>
</dbReference>
<dbReference type="GO" id="GO:0008757">
    <property type="term" value="F:S-adenosylmethionine-dependent methyltransferase activity"/>
    <property type="evidence" value="ECO:0007669"/>
    <property type="project" value="InterPro"/>
</dbReference>
<dbReference type="GO" id="GO:0009102">
    <property type="term" value="P:biotin biosynthetic process"/>
    <property type="evidence" value="ECO:0007669"/>
    <property type="project" value="UniProtKB-UniRule"/>
</dbReference>
<dbReference type="GO" id="GO:0032259">
    <property type="term" value="P:methylation"/>
    <property type="evidence" value="ECO:0007669"/>
    <property type="project" value="UniProtKB-KW"/>
</dbReference>
<dbReference type="CDD" id="cd02440">
    <property type="entry name" value="AdoMet_MTases"/>
    <property type="match status" value="1"/>
</dbReference>
<dbReference type="Gene3D" id="3.40.50.150">
    <property type="entry name" value="Vaccinia Virus protein VP39"/>
    <property type="match status" value="1"/>
</dbReference>
<dbReference type="HAMAP" id="MF_00835">
    <property type="entry name" value="BioC"/>
    <property type="match status" value="1"/>
</dbReference>
<dbReference type="InterPro" id="IPR011814">
    <property type="entry name" value="BioC"/>
</dbReference>
<dbReference type="InterPro" id="IPR013216">
    <property type="entry name" value="Methyltransf_11"/>
</dbReference>
<dbReference type="InterPro" id="IPR029063">
    <property type="entry name" value="SAM-dependent_MTases_sf"/>
</dbReference>
<dbReference type="NCBIfam" id="TIGR02072">
    <property type="entry name" value="BioC"/>
    <property type="match status" value="1"/>
</dbReference>
<dbReference type="PANTHER" id="PTHR43861:SF1">
    <property type="entry name" value="TRANS-ACONITATE 2-METHYLTRANSFERASE"/>
    <property type="match status" value="1"/>
</dbReference>
<dbReference type="PANTHER" id="PTHR43861">
    <property type="entry name" value="TRANS-ACONITATE 2-METHYLTRANSFERASE-RELATED"/>
    <property type="match status" value="1"/>
</dbReference>
<dbReference type="Pfam" id="PF08241">
    <property type="entry name" value="Methyltransf_11"/>
    <property type="match status" value="1"/>
</dbReference>
<dbReference type="SUPFAM" id="SSF53335">
    <property type="entry name" value="S-adenosyl-L-methionine-dependent methyltransferases"/>
    <property type="match status" value="1"/>
</dbReference>
<organism>
    <name type="scientific">Bacteroides thetaiotaomicron (strain ATCC 29148 / DSM 2079 / JCM 5827 / CCUG 10774 / NCTC 10582 / VPI-5482 / E50)</name>
    <dbReference type="NCBI Taxonomy" id="226186"/>
    <lineage>
        <taxon>Bacteria</taxon>
        <taxon>Pseudomonadati</taxon>
        <taxon>Bacteroidota</taxon>
        <taxon>Bacteroidia</taxon>
        <taxon>Bacteroidales</taxon>
        <taxon>Bacteroidaceae</taxon>
        <taxon>Bacteroides</taxon>
    </lineage>
</organism>
<evidence type="ECO:0000255" key="1">
    <source>
        <dbReference type="HAMAP-Rule" id="MF_00835"/>
    </source>
</evidence>
<protein>
    <recommendedName>
        <fullName evidence="1">Malonyl-[acyl-carrier protein] O-methyltransferase</fullName>
        <shortName evidence="1">Malonyl-ACP O-methyltransferase</shortName>
        <ecNumber evidence="1">2.1.1.197</ecNumber>
    </recommendedName>
    <alternativeName>
        <fullName evidence="1">Biotin synthesis protein BioC</fullName>
    </alternativeName>
</protein>
<gene>
    <name evidence="1" type="primary">bioC</name>
    <name type="ordered locus">BT_1445</name>
</gene>
<comment type="function">
    <text evidence="1">Converts the free carboxyl group of a malonyl-thioester to its methyl ester by transfer of a methyl group from S-adenosyl-L-methionine (SAM). It allows to synthesize pimeloyl-ACP via the fatty acid synthetic pathway.</text>
</comment>
<comment type="catalytic activity">
    <reaction evidence="1">
        <text>malonyl-[ACP] + S-adenosyl-L-methionine = malonyl-[ACP] methyl ester + S-adenosyl-L-homocysteine</text>
        <dbReference type="Rhea" id="RHEA:17105"/>
        <dbReference type="Rhea" id="RHEA-COMP:9623"/>
        <dbReference type="Rhea" id="RHEA-COMP:9954"/>
        <dbReference type="ChEBI" id="CHEBI:57856"/>
        <dbReference type="ChEBI" id="CHEBI:59789"/>
        <dbReference type="ChEBI" id="CHEBI:78449"/>
        <dbReference type="ChEBI" id="CHEBI:78845"/>
        <dbReference type="EC" id="2.1.1.197"/>
    </reaction>
</comment>
<comment type="pathway">
    <text evidence="1">Cofactor biosynthesis; biotin biosynthesis.</text>
</comment>
<comment type="similarity">
    <text evidence="1">Belongs to the methyltransferase superfamily.</text>
</comment>
<sequence>MNKTIIAERFSKAISTYPREANVQRQIANKMIRLLQKHIPSPCPKVIEFGCGTGIYSRMLLRTLRPEELLLNDLCPEMRYCCEDLLREKQVSFLSGDAETISFPDKSTLITSCSALQWFDSPEEFFKRCNTLLHSQGYFAFSTFGKKNMKEIRELTGKGLPYRSREELEAALSLHFDILYSEEELIPLSFEDPMKVLYHLKQTGVNGLSAQSSLYPKHEKQTWTRRDLQHFCERYTQEFTQGTSVSLTYHPIYIIAKKKKV</sequence>
<keyword id="KW-0093">Biotin biosynthesis</keyword>
<keyword id="KW-0489">Methyltransferase</keyword>
<keyword id="KW-1185">Reference proteome</keyword>
<keyword id="KW-0949">S-adenosyl-L-methionine</keyword>
<keyword id="KW-0808">Transferase</keyword>
<name>BIOC_BACTN</name>